<feature type="initiator methionine" description="Removed" evidence="3">
    <location>
        <position position="1"/>
    </location>
</feature>
<feature type="chain" id="PRO_0000362786" description="NAD(P)H-quinone oxidoreductase subunit 3">
    <location>
        <begin position="2"/>
        <end position="132"/>
    </location>
</feature>
<feature type="transmembrane region" description="Helical" evidence="2">
    <location>
        <begin position="22"/>
        <end position="42"/>
    </location>
</feature>
<feature type="transmembrane region" description="Helical" evidence="2">
    <location>
        <begin position="76"/>
        <end position="96"/>
    </location>
</feature>
<feature type="transmembrane region" description="Helical" evidence="2">
    <location>
        <begin position="101"/>
        <end position="121"/>
    </location>
</feature>
<feature type="helix" evidence="5">
    <location>
        <begin position="19"/>
        <end position="42"/>
    </location>
</feature>
<feature type="strand" evidence="6">
    <location>
        <begin position="49"/>
        <end position="54"/>
    </location>
</feature>
<feature type="helix" evidence="5">
    <location>
        <begin position="57"/>
        <end position="59"/>
    </location>
</feature>
<feature type="strand" evidence="5">
    <location>
        <begin position="66"/>
        <end position="69"/>
    </location>
</feature>
<feature type="helix" evidence="5">
    <location>
        <begin position="74"/>
        <end position="96"/>
    </location>
</feature>
<feature type="turn" evidence="5">
    <location>
        <begin position="97"/>
        <end position="100"/>
    </location>
</feature>
<feature type="helix" evidence="5">
    <location>
        <begin position="103"/>
        <end position="125"/>
    </location>
</feature>
<feature type="turn" evidence="7">
    <location>
        <begin position="126"/>
        <end position="129"/>
    </location>
</feature>
<accession>Q8DJ02</accession>
<keyword id="KW-0002">3D-structure</keyword>
<keyword id="KW-0903">Direct protein sequencing</keyword>
<keyword id="KW-0472">Membrane</keyword>
<keyword id="KW-0520">NAD</keyword>
<keyword id="KW-0521">NADP</keyword>
<keyword id="KW-0618">Plastoquinone</keyword>
<keyword id="KW-0874">Quinone</keyword>
<keyword id="KW-1185">Reference proteome</keyword>
<keyword id="KW-0793">Thylakoid</keyword>
<keyword id="KW-1278">Translocase</keyword>
<keyword id="KW-0812">Transmembrane</keyword>
<keyword id="KW-1133">Transmembrane helix</keyword>
<keyword id="KW-0813">Transport</keyword>
<protein>
    <recommendedName>
        <fullName>NAD(P)H-quinone oxidoreductase subunit 3</fullName>
        <ecNumber>7.1.1.-</ecNumber>
    </recommendedName>
    <alternativeName>
        <fullName>NAD(P)H dehydrogenase subunit 3</fullName>
    </alternativeName>
    <alternativeName>
        <fullName>NADH-plastoquinone oxidoreductase subunit 3</fullName>
    </alternativeName>
    <alternativeName>
        <fullName>NDH-1 subunit 3</fullName>
        <shortName>NDH-C</shortName>
    </alternativeName>
</protein>
<name>NU3C_THEVB</name>
<dbReference type="EC" id="7.1.1.-"/>
<dbReference type="EMBL" id="BA000039">
    <property type="protein sequence ID" value="BAC08981.1"/>
    <property type="molecule type" value="Genomic_DNA"/>
</dbReference>
<dbReference type="RefSeq" id="NP_682219.1">
    <property type="nucleotide sequence ID" value="NC_004113.1"/>
</dbReference>
<dbReference type="PDB" id="6HUM">
    <property type="method" value="EM"/>
    <property type="resolution" value="3.34 A"/>
    <property type="chains" value="C=1-132"/>
</dbReference>
<dbReference type="PDB" id="6KHI">
    <property type="method" value="EM"/>
    <property type="resolution" value="3.00 A"/>
    <property type="chains" value="C=1-132"/>
</dbReference>
<dbReference type="PDB" id="6KHJ">
    <property type="method" value="EM"/>
    <property type="resolution" value="3.00 A"/>
    <property type="chains" value="C=1-132"/>
</dbReference>
<dbReference type="PDB" id="6L7O">
    <property type="method" value="EM"/>
    <property type="resolution" value="3.20 A"/>
    <property type="chains" value="C=1-132"/>
</dbReference>
<dbReference type="PDB" id="6L7P">
    <property type="method" value="EM"/>
    <property type="resolution" value="3.60 A"/>
    <property type="chains" value="C=1-132"/>
</dbReference>
<dbReference type="PDB" id="6NBQ">
    <property type="method" value="EM"/>
    <property type="resolution" value="3.10 A"/>
    <property type="chains" value="C=1-132"/>
</dbReference>
<dbReference type="PDB" id="6NBX">
    <property type="method" value="EM"/>
    <property type="resolution" value="3.50 A"/>
    <property type="chains" value="C=1-132"/>
</dbReference>
<dbReference type="PDB" id="6NBY">
    <property type="method" value="EM"/>
    <property type="resolution" value="3.10 A"/>
    <property type="chains" value="C=1-132"/>
</dbReference>
<dbReference type="PDB" id="6TJV">
    <property type="method" value="EM"/>
    <property type="resolution" value="3.20 A"/>
    <property type="chains" value="C=1-132"/>
</dbReference>
<dbReference type="PDBsum" id="6HUM"/>
<dbReference type="PDBsum" id="6KHI"/>
<dbReference type="PDBsum" id="6KHJ"/>
<dbReference type="PDBsum" id="6L7O"/>
<dbReference type="PDBsum" id="6L7P"/>
<dbReference type="PDBsum" id="6NBQ"/>
<dbReference type="PDBsum" id="6NBX"/>
<dbReference type="PDBsum" id="6NBY"/>
<dbReference type="PDBsum" id="6TJV"/>
<dbReference type="EMDB" id="EMD-0281"/>
<dbReference type="EMDB" id="EMD-0415"/>
<dbReference type="EMDB" id="EMD-0425"/>
<dbReference type="EMDB" id="EMD-0849"/>
<dbReference type="EMDB" id="EMD-0850"/>
<dbReference type="EMDB" id="EMD-10513"/>
<dbReference type="EMDB" id="EMD-9989"/>
<dbReference type="EMDB" id="EMD-9990"/>
<dbReference type="SMR" id="Q8DJ02"/>
<dbReference type="IntAct" id="Q8DJ02">
    <property type="interactions" value="1"/>
</dbReference>
<dbReference type="STRING" id="197221.gene:10748028"/>
<dbReference type="TCDB" id="3.D.1.8.2">
    <property type="family name" value="the h+ or na+-translocating nadh dehydrogenase (ndh) family"/>
</dbReference>
<dbReference type="EnsemblBacteria" id="BAC08981">
    <property type="protein sequence ID" value="BAC08981"/>
    <property type="gene ID" value="BAC08981"/>
</dbReference>
<dbReference type="KEGG" id="tel:tlr1429"/>
<dbReference type="PATRIC" id="fig|197221.4.peg.1500"/>
<dbReference type="eggNOG" id="COG0838">
    <property type="taxonomic scope" value="Bacteria"/>
</dbReference>
<dbReference type="Proteomes" id="UP000000440">
    <property type="component" value="Chromosome"/>
</dbReference>
<dbReference type="GO" id="GO:0030964">
    <property type="term" value="C:NADH dehydrogenase complex"/>
    <property type="evidence" value="ECO:0007669"/>
    <property type="project" value="TreeGrafter"/>
</dbReference>
<dbReference type="GO" id="GO:0031676">
    <property type="term" value="C:plasma membrane-derived thylakoid membrane"/>
    <property type="evidence" value="ECO:0007669"/>
    <property type="project" value="UniProtKB-SubCell"/>
</dbReference>
<dbReference type="GO" id="GO:0008137">
    <property type="term" value="F:NADH dehydrogenase (ubiquinone) activity"/>
    <property type="evidence" value="ECO:0007669"/>
    <property type="project" value="InterPro"/>
</dbReference>
<dbReference type="GO" id="GO:0048038">
    <property type="term" value="F:quinone binding"/>
    <property type="evidence" value="ECO:0007669"/>
    <property type="project" value="UniProtKB-KW"/>
</dbReference>
<dbReference type="GO" id="GO:0019684">
    <property type="term" value="P:photosynthesis, light reaction"/>
    <property type="evidence" value="ECO:0007669"/>
    <property type="project" value="UniProtKB-UniRule"/>
</dbReference>
<dbReference type="Gene3D" id="1.20.58.1610">
    <property type="entry name" value="NADH:ubiquinone/plastoquinone oxidoreductase, chain 3"/>
    <property type="match status" value="1"/>
</dbReference>
<dbReference type="HAMAP" id="MF_01394">
    <property type="entry name" value="NDH1_NuoA"/>
    <property type="match status" value="1"/>
</dbReference>
<dbReference type="InterPro" id="IPR023043">
    <property type="entry name" value="NAD(P)H_OxRDtase_bac/plastid"/>
</dbReference>
<dbReference type="InterPro" id="IPR000440">
    <property type="entry name" value="NADH_UbQ/plastoQ_OxRdtase_su3"/>
</dbReference>
<dbReference type="InterPro" id="IPR038430">
    <property type="entry name" value="NDAH_ubi_oxred_su3_sf"/>
</dbReference>
<dbReference type="PANTHER" id="PTHR11058">
    <property type="entry name" value="NADH-UBIQUINONE OXIDOREDUCTASE CHAIN 3"/>
    <property type="match status" value="1"/>
</dbReference>
<dbReference type="PANTHER" id="PTHR11058:SF9">
    <property type="entry name" value="NADH-UBIQUINONE OXIDOREDUCTASE CHAIN 3"/>
    <property type="match status" value="1"/>
</dbReference>
<dbReference type="Pfam" id="PF00507">
    <property type="entry name" value="Oxidored_q4"/>
    <property type="match status" value="1"/>
</dbReference>
<sequence>MVAIPRLRDTATVFVLSGYEYFLGFLIICSLVPVLALAASALLRPKSGRMIRLTTYESGMEPIGGAWIQFNVRYYMFALVFVIFDVETVFLYPWAVAFHQLGLLAFIEALIFIAILVVALVYAWRKRALEWS</sequence>
<organism>
    <name type="scientific">Thermosynechococcus vestitus (strain NIES-2133 / IAM M-273 / BP-1)</name>
    <dbReference type="NCBI Taxonomy" id="197221"/>
    <lineage>
        <taxon>Bacteria</taxon>
        <taxon>Bacillati</taxon>
        <taxon>Cyanobacteriota</taxon>
        <taxon>Cyanophyceae</taxon>
        <taxon>Acaryochloridales</taxon>
        <taxon>Thermosynechococcaceae</taxon>
        <taxon>Thermosynechococcus</taxon>
    </lineage>
</organism>
<gene>
    <name type="primary">ndhC</name>
    <name type="ordered locus">tlr1429</name>
</gene>
<comment type="function">
    <text evidence="1">NDH-1 shuttles electrons from an unknown electron donor, via FMN and iron-sulfur (Fe-S) centers, to quinones in the respiratory and/or the photosynthetic chain. The immediate electron acceptor for the enzyme in this species is believed to be plastoquinone. Couples the redox reaction to proton translocation, and thus conserves the redox energy in a proton gradient. Cyanobacterial NDH-1 also plays a role in inorganic carbon-concentration (By similarity).</text>
</comment>
<comment type="catalytic activity">
    <reaction>
        <text>a plastoquinone + NADH + (n+1) H(+)(in) = a plastoquinol + NAD(+) + n H(+)(out)</text>
        <dbReference type="Rhea" id="RHEA:42608"/>
        <dbReference type="Rhea" id="RHEA-COMP:9561"/>
        <dbReference type="Rhea" id="RHEA-COMP:9562"/>
        <dbReference type="ChEBI" id="CHEBI:15378"/>
        <dbReference type="ChEBI" id="CHEBI:17757"/>
        <dbReference type="ChEBI" id="CHEBI:57540"/>
        <dbReference type="ChEBI" id="CHEBI:57945"/>
        <dbReference type="ChEBI" id="CHEBI:62192"/>
    </reaction>
</comment>
<comment type="catalytic activity">
    <reaction>
        <text>a plastoquinone + NADPH + (n+1) H(+)(in) = a plastoquinol + NADP(+) + n H(+)(out)</text>
        <dbReference type="Rhea" id="RHEA:42612"/>
        <dbReference type="Rhea" id="RHEA-COMP:9561"/>
        <dbReference type="Rhea" id="RHEA-COMP:9562"/>
        <dbReference type="ChEBI" id="CHEBI:15378"/>
        <dbReference type="ChEBI" id="CHEBI:17757"/>
        <dbReference type="ChEBI" id="CHEBI:57783"/>
        <dbReference type="ChEBI" id="CHEBI:58349"/>
        <dbReference type="ChEBI" id="CHEBI:62192"/>
    </reaction>
</comment>
<comment type="subunit">
    <text>NDH-1 can be composed of about 15 different subunits; different subcomplexes with different compositions have been identified which probably have different functions.</text>
</comment>
<comment type="subcellular location">
    <subcellularLocation>
        <location evidence="4">Cellular thylakoid membrane</location>
        <topology evidence="4">Multi-pass membrane protein</topology>
    </subcellularLocation>
</comment>
<comment type="similarity">
    <text evidence="4">Belongs to the complex I subunit 3 family.</text>
</comment>
<evidence type="ECO:0000250" key="1"/>
<evidence type="ECO:0000255" key="2"/>
<evidence type="ECO:0000269" key="3">
    <source>
    </source>
</evidence>
<evidence type="ECO:0000305" key="4"/>
<evidence type="ECO:0007829" key="5">
    <source>
        <dbReference type="PDB" id="6KHI"/>
    </source>
</evidence>
<evidence type="ECO:0007829" key="6">
    <source>
        <dbReference type="PDB" id="6L7O"/>
    </source>
</evidence>
<evidence type="ECO:0007829" key="7">
    <source>
        <dbReference type="PDB" id="6NBQ"/>
    </source>
</evidence>
<proteinExistence type="evidence at protein level"/>
<reference key="1">
    <citation type="journal article" date="2002" name="DNA Res.">
        <title>Complete genome structure of the thermophilic cyanobacterium Thermosynechococcus elongatus BP-1.</title>
        <authorList>
            <person name="Nakamura Y."/>
            <person name="Kaneko T."/>
            <person name="Sato S."/>
            <person name="Ikeuchi M."/>
            <person name="Katoh H."/>
            <person name="Sasamoto S."/>
            <person name="Watanabe A."/>
            <person name="Iriguchi M."/>
            <person name="Kawashima K."/>
            <person name="Kimura T."/>
            <person name="Kishida Y."/>
            <person name="Kiyokawa C."/>
            <person name="Kohara M."/>
            <person name="Matsumoto M."/>
            <person name="Matsuno A."/>
            <person name="Nakazaki N."/>
            <person name="Shimpo S."/>
            <person name="Sugimoto M."/>
            <person name="Takeuchi C."/>
            <person name="Yamada M."/>
            <person name="Tabata S."/>
        </authorList>
    </citation>
    <scope>NUCLEOTIDE SEQUENCE [LARGE SCALE GENOMIC DNA]</scope>
    <source>
        <strain>NIES-2133 / IAM M-273 / BP-1</strain>
    </source>
</reference>
<reference key="2">
    <citation type="journal article" date="2005" name="Biochem. J.">
        <title>Isolation, subunit composition and interaction of the NDH-1 complexes from Thermosynechococcus elongatus BP-1.</title>
        <authorList>
            <person name="Zhang P."/>
            <person name="Battchikova N."/>
            <person name="Paakkarinen V."/>
            <person name="Katoh H."/>
            <person name="Iwai M."/>
            <person name="Ikeuchi M."/>
            <person name="Pakrasi H.B."/>
            <person name="Ogawa T."/>
            <person name="Aro E.-M."/>
        </authorList>
    </citation>
    <scope>PROTEIN SEQUENCE OF 2-8 AND 53-73</scope>
    <scope>CHARACTERIZATION AS A MEMBER OF THE NAD(P)H-QUINONE OXIDOREDUCTASE COMPLEX</scope>
    <scope>SUBCOMPLEXES OF NDH-1</scope>
</reference>